<comment type="function">
    <text evidence="1">Core subunit of the mitochondrial membrane respiratory chain NADH dehydrogenase (Complex I) that is believed to belong to the minimal assembly required for catalysis. Complex I functions in the transfer of electrons from NADH to the respiratory chain. The immediate electron acceptor for the enzyme is believed to be ubiquinone (By similarity).</text>
</comment>
<comment type="catalytic activity">
    <reaction>
        <text>a ubiquinone + NADH + 5 H(+)(in) = a ubiquinol + NAD(+) + 4 H(+)(out)</text>
        <dbReference type="Rhea" id="RHEA:29091"/>
        <dbReference type="Rhea" id="RHEA-COMP:9565"/>
        <dbReference type="Rhea" id="RHEA-COMP:9566"/>
        <dbReference type="ChEBI" id="CHEBI:15378"/>
        <dbReference type="ChEBI" id="CHEBI:16389"/>
        <dbReference type="ChEBI" id="CHEBI:17976"/>
        <dbReference type="ChEBI" id="CHEBI:57540"/>
        <dbReference type="ChEBI" id="CHEBI:57945"/>
        <dbReference type="EC" id="7.1.1.2"/>
    </reaction>
</comment>
<comment type="subcellular location">
    <subcellularLocation>
        <location evidence="3">Mitochondrion membrane</location>
        <topology evidence="3">Multi-pass membrane protein</topology>
    </subcellularLocation>
</comment>
<comment type="similarity">
    <text evidence="3">Belongs to the complex I subunit 6 family.</text>
</comment>
<protein>
    <recommendedName>
        <fullName>NADH-ubiquinone oxidoreductase chain 6</fullName>
        <ecNumber>7.1.1.2</ecNumber>
    </recommendedName>
    <alternativeName>
        <fullName>NADH dehydrogenase subunit 6</fullName>
    </alternativeName>
</protein>
<evidence type="ECO:0000250" key="1"/>
<evidence type="ECO:0000255" key="2"/>
<evidence type="ECO:0000305" key="3"/>
<geneLocation type="mitochondrion"/>
<reference key="1">
    <citation type="journal article" date="1992" name="Plant Mol. Biol.">
        <title>The wheat mitochondrial genome contains an ORF showing sequence homology to the gene encoding the subunit 6 of the NADH-ubiquinone oxidoreductase.</title>
        <authorList>
            <person name="Haouazine N."/>
            <person name="de Souza A."/>
            <person name="Jubier M.-F."/>
            <person name="Lancelin D."/>
            <person name="Delcher E."/>
            <person name="Lejeune B."/>
        </authorList>
    </citation>
    <scope>NUCLEOTIDE SEQUENCE [GENOMIC DNA]</scope>
</reference>
<accession>Q02500</accession>
<organism>
    <name type="scientific">Triticum aestivum</name>
    <name type="common">Wheat</name>
    <dbReference type="NCBI Taxonomy" id="4565"/>
    <lineage>
        <taxon>Eukaryota</taxon>
        <taxon>Viridiplantae</taxon>
        <taxon>Streptophyta</taxon>
        <taxon>Embryophyta</taxon>
        <taxon>Tracheophyta</taxon>
        <taxon>Spermatophyta</taxon>
        <taxon>Magnoliopsida</taxon>
        <taxon>Liliopsida</taxon>
        <taxon>Poales</taxon>
        <taxon>Poaceae</taxon>
        <taxon>BOP clade</taxon>
        <taxon>Pooideae</taxon>
        <taxon>Triticodae</taxon>
        <taxon>Triticeae</taxon>
        <taxon>Triticinae</taxon>
        <taxon>Triticum</taxon>
    </lineage>
</organism>
<proteinExistence type="inferred from homology"/>
<keyword id="KW-0249">Electron transport</keyword>
<keyword id="KW-0472">Membrane</keyword>
<keyword id="KW-0496">Mitochondrion</keyword>
<keyword id="KW-0520">NAD</keyword>
<keyword id="KW-1185">Reference proteome</keyword>
<keyword id="KW-0679">Respiratory chain</keyword>
<keyword id="KW-1278">Translocase</keyword>
<keyword id="KW-0812">Transmembrane</keyword>
<keyword id="KW-1133">Transmembrane helix</keyword>
<keyword id="KW-0813">Transport</keyword>
<keyword id="KW-0830">Ubiquinone</keyword>
<dbReference type="EC" id="7.1.1.2"/>
<dbReference type="EMBL" id="X62100">
    <property type="protein sequence ID" value="CAA44009.1"/>
    <property type="molecule type" value="Genomic_DNA"/>
</dbReference>
<dbReference type="PIR" id="S78470">
    <property type="entry name" value="S78470"/>
</dbReference>
<dbReference type="RefSeq" id="YP_398421.1">
    <property type="nucleotide sequence ID" value="NC_007579.1"/>
</dbReference>
<dbReference type="SMR" id="Q02500"/>
<dbReference type="PaxDb" id="4565-EPlTAEP00000010099"/>
<dbReference type="EnsemblPlants" id="TraesARIUn03G04662390.1">
    <property type="protein sequence ID" value="TraesARIUn03G04662390.1.CDS1"/>
    <property type="gene ID" value="TraesARIUn03G04662390"/>
</dbReference>
<dbReference type="EnsemblPlants" id="TraesCS2B03G0735600.1">
    <property type="protein sequence ID" value="TraesCS2B03G0735600.1.CDS1"/>
    <property type="gene ID" value="TraesCS2B03G0735600"/>
</dbReference>
<dbReference type="EnsemblPlants" id="TraesCS6B03G1282800.1">
    <property type="protein sequence ID" value="TraesCS6B03G1282800.1.CDS1"/>
    <property type="gene ID" value="TraesCS6B03G1282800"/>
</dbReference>
<dbReference type="EnsemblPlants" id="TraesJAG4A03G02219660.1">
    <property type="protein sequence ID" value="TraesJAG4A03G02219660.1.CDS1"/>
    <property type="gene ID" value="TraesJAG4A03G02219660"/>
</dbReference>
<dbReference type="EnsemblPlants" id="TraesKAR1A01G0040210.1">
    <property type="protein sequence ID" value="cds.TraesKAR1A01G0040210.1"/>
    <property type="gene ID" value="TraesKAR1A01G0040210"/>
</dbReference>
<dbReference type="EnsemblPlants" id="TraesKAR1A01G0040440.1">
    <property type="protein sequence ID" value="cds.TraesKAR1A01G0040440.1"/>
    <property type="gene ID" value="TraesKAR1A01G0040440"/>
</dbReference>
<dbReference type="EnsemblPlants" id="TraesKARUn01G0099180.1">
    <property type="protein sequence ID" value="cds.TraesKARUn01G0099180.1"/>
    <property type="gene ID" value="TraesKARUn01G0099180"/>
</dbReference>
<dbReference type="EnsemblPlants" id="TraesKARUn01G0111140.1">
    <property type="protein sequence ID" value="cds.TraesKARUn01G0111140.1"/>
    <property type="gene ID" value="TraesKARUn01G0111140"/>
</dbReference>
<dbReference type="EnsemblPlants" id="TraesKARUn01G0112900.1">
    <property type="protein sequence ID" value="cds.TraesKARUn01G0112900.1"/>
    <property type="gene ID" value="TraesKARUn01G0112900"/>
</dbReference>
<dbReference type="EnsemblPlants" id="TraesKARUn01G0114650.1">
    <property type="protein sequence ID" value="cds.TraesKARUn01G0114650.1"/>
    <property type="gene ID" value="TraesKARUn01G0114650"/>
</dbReference>
<dbReference type="EnsemblPlants" id="TraesKARUn01G0130330.1">
    <property type="protein sequence ID" value="cds.TraesKARUn01G0130330.1"/>
    <property type="gene ID" value="TraesKARUn01G0130330"/>
</dbReference>
<dbReference type="EnsemblPlants" id="TraesKARUn01G0135120.1">
    <property type="protein sequence ID" value="cds.TraesKARUn01G0135120.1"/>
    <property type="gene ID" value="TraesKARUn01G0135120"/>
</dbReference>
<dbReference type="EnsemblPlants" id="TraesKARUn01G0148140.1">
    <property type="protein sequence ID" value="cds.TraesKARUn01G0148140.1"/>
    <property type="gene ID" value="TraesKARUn01G0148140"/>
</dbReference>
<dbReference type="EnsemblPlants" id="TraesKARUn01G0190200.1">
    <property type="protein sequence ID" value="cds.TraesKARUn01G0190200.1"/>
    <property type="gene ID" value="TraesKARUn01G0190200"/>
</dbReference>
<dbReference type="EnsemblPlants" id="TraesLDM4A03G02219250.1">
    <property type="protein sequence ID" value="TraesLDM4A03G02219250.1.CDS1"/>
    <property type="gene ID" value="TraesLDM4A03G02219250"/>
</dbReference>
<dbReference type="EnsemblPlants" id="TraesLDM6B03G03590440.1">
    <property type="protein sequence ID" value="TraesLDM6B03G03590440.1.CDS1"/>
    <property type="gene ID" value="TraesLDM6B03G03590440"/>
</dbReference>
<dbReference type="EnsemblPlants" id="TraesPARA_EIv1.0_0086560.1">
    <property type="protein sequence ID" value="TraesPARA_EIv1.0_0086560.1.CDS1"/>
    <property type="gene ID" value="TraesPARA_EIv1.0_0086560"/>
</dbReference>
<dbReference type="EnsemblPlants" id="TraesPARA_EIv1.0_2672130.1">
    <property type="protein sequence ID" value="TraesPARA_EIv1.0_2672130.1.CDS1"/>
    <property type="gene ID" value="TraesPARA_EIv1.0_2672130"/>
</dbReference>
<dbReference type="EnsemblPlants" id="TraesRN1A0100188800.1">
    <property type="protein sequence ID" value="TraesRN1A0100188800.1"/>
    <property type="gene ID" value="TraesRN1A0100188800"/>
</dbReference>
<dbReference type="EnsemblPlants" id="TraesRN1A0100188900.1">
    <property type="protein sequence ID" value="TraesRN1A0100188900.1"/>
    <property type="gene ID" value="TraesRN1A0100188900"/>
</dbReference>
<dbReference type="EnsemblPlants" id="TraesSTA4A03G02216300.1">
    <property type="protein sequence ID" value="TraesSTA4A03G02216300.1.CDS1"/>
    <property type="gene ID" value="TraesSTA4A03G02216300"/>
</dbReference>
<dbReference type="Gramene" id="TraesARIUn03G04662390.1">
    <property type="protein sequence ID" value="TraesARIUn03G04662390.1.CDS1"/>
    <property type="gene ID" value="TraesARIUn03G04662390"/>
</dbReference>
<dbReference type="Gramene" id="TraesCS2B03G0735600.1">
    <property type="protein sequence ID" value="TraesCS2B03G0735600.1.CDS1"/>
    <property type="gene ID" value="TraesCS2B03G0735600"/>
</dbReference>
<dbReference type="Gramene" id="TraesCS6B03G1282800.1">
    <property type="protein sequence ID" value="TraesCS6B03G1282800.1.CDS1"/>
    <property type="gene ID" value="TraesCS6B03G1282800"/>
</dbReference>
<dbReference type="Gramene" id="TraesJAG4A03G02219660.1">
    <property type="protein sequence ID" value="TraesJAG4A03G02219660.1.CDS1"/>
    <property type="gene ID" value="TraesJAG4A03G02219660"/>
</dbReference>
<dbReference type="Gramene" id="TraesKAR1A01G0040210.1">
    <property type="protein sequence ID" value="cds.TraesKAR1A01G0040210.1"/>
    <property type="gene ID" value="TraesKAR1A01G0040210"/>
</dbReference>
<dbReference type="Gramene" id="TraesKAR1A01G0040440.1">
    <property type="protein sequence ID" value="cds.TraesKAR1A01G0040440.1"/>
    <property type="gene ID" value="TraesKAR1A01G0040440"/>
</dbReference>
<dbReference type="Gramene" id="TraesKARUn01G0099180.1">
    <property type="protein sequence ID" value="cds.TraesKARUn01G0099180.1"/>
    <property type="gene ID" value="TraesKARUn01G0099180"/>
</dbReference>
<dbReference type="Gramene" id="TraesKARUn01G0111140.1">
    <property type="protein sequence ID" value="cds.TraesKARUn01G0111140.1"/>
    <property type="gene ID" value="TraesKARUn01G0111140"/>
</dbReference>
<dbReference type="Gramene" id="TraesKARUn01G0112900.1">
    <property type="protein sequence ID" value="cds.TraesKARUn01G0112900.1"/>
    <property type="gene ID" value="TraesKARUn01G0112900"/>
</dbReference>
<dbReference type="Gramene" id="TraesKARUn01G0114650.1">
    <property type="protein sequence ID" value="cds.TraesKARUn01G0114650.1"/>
    <property type="gene ID" value="TraesKARUn01G0114650"/>
</dbReference>
<dbReference type="Gramene" id="TraesKARUn01G0130330.1">
    <property type="protein sequence ID" value="cds.TraesKARUn01G0130330.1"/>
    <property type="gene ID" value="TraesKARUn01G0130330"/>
</dbReference>
<dbReference type="Gramene" id="TraesKARUn01G0135120.1">
    <property type="protein sequence ID" value="cds.TraesKARUn01G0135120.1"/>
    <property type="gene ID" value="TraesKARUn01G0135120"/>
</dbReference>
<dbReference type="Gramene" id="TraesKARUn01G0148140.1">
    <property type="protein sequence ID" value="cds.TraesKARUn01G0148140.1"/>
    <property type="gene ID" value="TraesKARUn01G0148140"/>
</dbReference>
<dbReference type="Gramene" id="TraesKARUn01G0190200.1">
    <property type="protein sequence ID" value="cds.TraesKARUn01G0190200.1"/>
    <property type="gene ID" value="TraesKARUn01G0190200"/>
</dbReference>
<dbReference type="Gramene" id="TraesLDM4A03G02219250.1">
    <property type="protein sequence ID" value="TraesLDM4A03G02219250.1.CDS1"/>
    <property type="gene ID" value="TraesLDM4A03G02219250"/>
</dbReference>
<dbReference type="Gramene" id="TraesLDM6B03G03590440.1">
    <property type="protein sequence ID" value="TraesLDM6B03G03590440.1.CDS1"/>
    <property type="gene ID" value="TraesLDM6B03G03590440"/>
</dbReference>
<dbReference type="Gramene" id="TraesPARA_EIv1.0_0086560.1">
    <property type="protein sequence ID" value="TraesPARA_EIv1.0_0086560.1.CDS1"/>
    <property type="gene ID" value="TraesPARA_EIv1.0_0086560"/>
</dbReference>
<dbReference type="Gramene" id="TraesPARA_EIv1.0_2672130.1">
    <property type="protein sequence ID" value="TraesPARA_EIv1.0_2672130.1.CDS1"/>
    <property type="gene ID" value="TraesPARA_EIv1.0_2672130"/>
</dbReference>
<dbReference type="Gramene" id="TraesRN1A0100188800.1">
    <property type="protein sequence ID" value="TraesRN1A0100188800.1"/>
    <property type="gene ID" value="TraesRN1A0100188800"/>
</dbReference>
<dbReference type="Gramene" id="TraesRN1A0100188900.1">
    <property type="protein sequence ID" value="TraesRN1A0100188900.1"/>
    <property type="gene ID" value="TraesRN1A0100188900"/>
</dbReference>
<dbReference type="Gramene" id="TraesSTA4A03G02216300.1">
    <property type="protein sequence ID" value="TraesSTA4A03G02216300.1.CDS1"/>
    <property type="gene ID" value="TraesSTA4A03G02216300"/>
</dbReference>
<dbReference type="eggNOG" id="ENOG502S66Q">
    <property type="taxonomic scope" value="Eukaryota"/>
</dbReference>
<dbReference type="HOGENOM" id="CLU_085957_5_2_1"/>
<dbReference type="OrthoDB" id="5975253at2759"/>
<dbReference type="Proteomes" id="UP000019116">
    <property type="component" value="Unplaced"/>
</dbReference>
<dbReference type="GO" id="GO:0031966">
    <property type="term" value="C:mitochondrial membrane"/>
    <property type="evidence" value="ECO:0007669"/>
    <property type="project" value="UniProtKB-SubCell"/>
</dbReference>
<dbReference type="GO" id="GO:0008137">
    <property type="term" value="F:NADH dehydrogenase (ubiquinone) activity"/>
    <property type="evidence" value="ECO:0007669"/>
    <property type="project" value="UniProtKB-EC"/>
</dbReference>
<dbReference type="FunFam" id="1.20.120.1200:FF:000003">
    <property type="entry name" value="NADH-ubiquinone oxidoreductase chain 6"/>
    <property type="match status" value="1"/>
</dbReference>
<dbReference type="Gene3D" id="1.20.120.1200">
    <property type="entry name" value="NADH-ubiquinone/plastoquinone oxidoreductase chain 6, subunit NuoJ"/>
    <property type="match status" value="1"/>
</dbReference>
<dbReference type="InterPro" id="IPR001457">
    <property type="entry name" value="NADH_UbQ/plastoQ_OxRdtase_su6"/>
</dbReference>
<dbReference type="InterPro" id="IPR042106">
    <property type="entry name" value="Nuo/plastoQ_OxRdtase_6_NuoJ"/>
</dbReference>
<dbReference type="NCBIfam" id="NF005164">
    <property type="entry name" value="PRK06638.1-4"/>
    <property type="match status" value="1"/>
</dbReference>
<dbReference type="PANTHER" id="PTHR33269">
    <property type="entry name" value="NADH-UBIQUINONE OXIDOREDUCTASE CHAIN 6"/>
    <property type="match status" value="1"/>
</dbReference>
<dbReference type="PANTHER" id="PTHR33269:SF17">
    <property type="entry name" value="NADH-UBIQUINONE OXIDOREDUCTASE CHAIN 6"/>
    <property type="match status" value="1"/>
</dbReference>
<dbReference type="Pfam" id="PF00499">
    <property type="entry name" value="Oxidored_q3"/>
    <property type="match status" value="1"/>
</dbReference>
<sequence length="247" mass="28008">MRLLAPAFKFHFKGGRRTMILSVLSSPALVSGLMVVRAKNPVHSVLFPILVFCDTSGLLILLGLDFSAMISPVVHIGAIAVSFLFVVMMFNIQIAEIHEEVLRYLPVSGIIGLIFWWEMFFILDNETIPLLPTHRNTTSLRYTVYAGKVRSWTNLETLGNLLYTYYSVWFLVSSLILLVAMIGAIVLTMHRTTKVKRQDVFRRNALDSRSHIMNRTISPFGHSHRRSFSSGAGGPPDNYKETFKMWI</sequence>
<name>NU6M_WHEAT</name>
<feature type="chain" id="PRO_0000118347" description="NADH-ubiquinone oxidoreductase chain 6">
    <location>
        <begin position="1"/>
        <end position="247"/>
    </location>
</feature>
<feature type="transmembrane region" description="Helical" evidence="2">
    <location>
        <begin position="18"/>
        <end position="38"/>
    </location>
</feature>
<feature type="transmembrane region" description="Helical" evidence="2">
    <location>
        <begin position="44"/>
        <end position="64"/>
    </location>
</feature>
<feature type="transmembrane region" description="Helical" evidence="2">
    <location>
        <begin position="70"/>
        <end position="90"/>
    </location>
</feature>
<feature type="transmembrane region" description="Helical" evidence="2">
    <location>
        <begin position="104"/>
        <end position="124"/>
    </location>
</feature>
<feature type="transmembrane region" description="Helical" evidence="2">
    <location>
        <begin position="168"/>
        <end position="188"/>
    </location>
</feature>
<gene>
    <name type="primary">ND6</name>
    <name type="synonym">NAD6</name>
</gene>